<sequence>MVEAGDFRRGLTIEYDGQIFQVIEFLHVKPGKGAAFVRTKLKNIKTGAVIEKTFRPDERMPLAHIERREMQYLYNDGELYYFMDTQTYEQIALNQEMVGDALKFVKENMTVTVLSHNGVVFGVEPPRFVELEVIDTEPGFKGDTQTGATKPAKVETGAVIQVPLFINVGDKIKIDTSTEEYLSRV</sequence>
<keyword id="KW-0963">Cytoplasm</keyword>
<keyword id="KW-0251">Elongation factor</keyword>
<keyword id="KW-0648">Protein biosynthesis</keyword>
<accession>B9MLY0</accession>
<name>EFP_CALBD</name>
<proteinExistence type="inferred from homology"/>
<evidence type="ECO:0000255" key="1">
    <source>
        <dbReference type="HAMAP-Rule" id="MF_00141"/>
    </source>
</evidence>
<comment type="function">
    <text evidence="1">Involved in peptide bond synthesis. Stimulates efficient translation and peptide-bond synthesis on native or reconstituted 70S ribosomes in vitro. Probably functions indirectly by altering the affinity of the ribosome for aminoacyl-tRNA, thus increasing their reactivity as acceptors for peptidyl transferase.</text>
</comment>
<comment type="pathway">
    <text evidence="1">Protein biosynthesis; polypeptide chain elongation.</text>
</comment>
<comment type="subcellular location">
    <subcellularLocation>
        <location evidence="1">Cytoplasm</location>
    </subcellularLocation>
</comment>
<comment type="similarity">
    <text evidence="1">Belongs to the elongation factor P family.</text>
</comment>
<protein>
    <recommendedName>
        <fullName evidence="1">Elongation factor P</fullName>
        <shortName evidence="1">EF-P</shortName>
    </recommendedName>
</protein>
<gene>
    <name evidence="1" type="primary">efp</name>
    <name type="ordered locus">Athe_2128</name>
</gene>
<feature type="chain" id="PRO_1000122985" description="Elongation factor P">
    <location>
        <begin position="1"/>
        <end position="185"/>
    </location>
</feature>
<organism>
    <name type="scientific">Caldicellulosiruptor bescii (strain ATCC BAA-1888 / DSM 6725 / KCTC 15123 / Z-1320)</name>
    <name type="common">Anaerocellum thermophilum</name>
    <dbReference type="NCBI Taxonomy" id="521460"/>
    <lineage>
        <taxon>Bacteria</taxon>
        <taxon>Bacillati</taxon>
        <taxon>Bacillota</taxon>
        <taxon>Bacillota incertae sedis</taxon>
        <taxon>Caldicellulosiruptorales</taxon>
        <taxon>Caldicellulosiruptoraceae</taxon>
        <taxon>Caldicellulosiruptor</taxon>
    </lineage>
</organism>
<dbReference type="EMBL" id="CP001393">
    <property type="protein sequence ID" value="ACM61203.1"/>
    <property type="molecule type" value="Genomic_DNA"/>
</dbReference>
<dbReference type="RefSeq" id="WP_013402574.1">
    <property type="nucleotide sequence ID" value="NC_012034.1"/>
</dbReference>
<dbReference type="SMR" id="B9MLY0"/>
<dbReference type="STRING" id="521460.Athe_2128"/>
<dbReference type="GeneID" id="31773477"/>
<dbReference type="KEGG" id="ate:Athe_2128"/>
<dbReference type="eggNOG" id="COG0231">
    <property type="taxonomic scope" value="Bacteria"/>
</dbReference>
<dbReference type="HOGENOM" id="CLU_074944_0_1_9"/>
<dbReference type="UniPathway" id="UPA00345"/>
<dbReference type="Proteomes" id="UP000007723">
    <property type="component" value="Chromosome"/>
</dbReference>
<dbReference type="GO" id="GO:0005737">
    <property type="term" value="C:cytoplasm"/>
    <property type="evidence" value="ECO:0007669"/>
    <property type="project" value="UniProtKB-SubCell"/>
</dbReference>
<dbReference type="GO" id="GO:0003746">
    <property type="term" value="F:translation elongation factor activity"/>
    <property type="evidence" value="ECO:0007669"/>
    <property type="project" value="UniProtKB-UniRule"/>
</dbReference>
<dbReference type="GO" id="GO:0043043">
    <property type="term" value="P:peptide biosynthetic process"/>
    <property type="evidence" value="ECO:0007669"/>
    <property type="project" value="InterPro"/>
</dbReference>
<dbReference type="CDD" id="cd04470">
    <property type="entry name" value="S1_EF-P_repeat_1"/>
    <property type="match status" value="1"/>
</dbReference>
<dbReference type="CDD" id="cd05794">
    <property type="entry name" value="S1_EF-P_repeat_2"/>
    <property type="match status" value="1"/>
</dbReference>
<dbReference type="FunFam" id="2.30.30.30:FF:000003">
    <property type="entry name" value="Elongation factor P"/>
    <property type="match status" value="1"/>
</dbReference>
<dbReference type="FunFam" id="2.40.50.140:FF:000004">
    <property type="entry name" value="Elongation factor P"/>
    <property type="match status" value="1"/>
</dbReference>
<dbReference type="FunFam" id="2.40.50.140:FF:000009">
    <property type="entry name" value="Elongation factor P"/>
    <property type="match status" value="1"/>
</dbReference>
<dbReference type="Gene3D" id="2.30.30.30">
    <property type="match status" value="1"/>
</dbReference>
<dbReference type="Gene3D" id="2.40.50.140">
    <property type="entry name" value="Nucleic acid-binding proteins"/>
    <property type="match status" value="2"/>
</dbReference>
<dbReference type="HAMAP" id="MF_00141">
    <property type="entry name" value="EF_P"/>
    <property type="match status" value="1"/>
</dbReference>
<dbReference type="InterPro" id="IPR015365">
    <property type="entry name" value="Elong-fact-P_C"/>
</dbReference>
<dbReference type="InterPro" id="IPR012340">
    <property type="entry name" value="NA-bd_OB-fold"/>
</dbReference>
<dbReference type="InterPro" id="IPR014722">
    <property type="entry name" value="Rib_uL2_dom2"/>
</dbReference>
<dbReference type="InterPro" id="IPR020599">
    <property type="entry name" value="Transl_elong_fac_P/YeiP"/>
</dbReference>
<dbReference type="InterPro" id="IPR013185">
    <property type="entry name" value="Transl_elong_KOW-like"/>
</dbReference>
<dbReference type="InterPro" id="IPR001059">
    <property type="entry name" value="Transl_elong_P/YeiP_cen"/>
</dbReference>
<dbReference type="InterPro" id="IPR013852">
    <property type="entry name" value="Transl_elong_P/YeiP_CS"/>
</dbReference>
<dbReference type="InterPro" id="IPR011768">
    <property type="entry name" value="Transl_elongation_fac_P"/>
</dbReference>
<dbReference type="InterPro" id="IPR008991">
    <property type="entry name" value="Translation_prot_SH3-like_sf"/>
</dbReference>
<dbReference type="NCBIfam" id="TIGR00038">
    <property type="entry name" value="efp"/>
    <property type="match status" value="1"/>
</dbReference>
<dbReference type="NCBIfam" id="NF001810">
    <property type="entry name" value="PRK00529.1"/>
    <property type="match status" value="1"/>
</dbReference>
<dbReference type="PANTHER" id="PTHR30053">
    <property type="entry name" value="ELONGATION FACTOR P"/>
    <property type="match status" value="1"/>
</dbReference>
<dbReference type="PANTHER" id="PTHR30053:SF12">
    <property type="entry name" value="ELONGATION FACTOR P (EF-P) FAMILY PROTEIN"/>
    <property type="match status" value="1"/>
</dbReference>
<dbReference type="Pfam" id="PF01132">
    <property type="entry name" value="EFP"/>
    <property type="match status" value="1"/>
</dbReference>
<dbReference type="Pfam" id="PF08207">
    <property type="entry name" value="EFP_N"/>
    <property type="match status" value="1"/>
</dbReference>
<dbReference type="Pfam" id="PF09285">
    <property type="entry name" value="Elong-fact-P_C"/>
    <property type="match status" value="1"/>
</dbReference>
<dbReference type="PIRSF" id="PIRSF005901">
    <property type="entry name" value="EF-P"/>
    <property type="match status" value="1"/>
</dbReference>
<dbReference type="SMART" id="SM01185">
    <property type="entry name" value="EFP"/>
    <property type="match status" value="1"/>
</dbReference>
<dbReference type="SMART" id="SM00841">
    <property type="entry name" value="Elong-fact-P_C"/>
    <property type="match status" value="1"/>
</dbReference>
<dbReference type="SUPFAM" id="SSF50249">
    <property type="entry name" value="Nucleic acid-binding proteins"/>
    <property type="match status" value="2"/>
</dbReference>
<dbReference type="SUPFAM" id="SSF50104">
    <property type="entry name" value="Translation proteins SH3-like domain"/>
    <property type="match status" value="1"/>
</dbReference>
<dbReference type="PROSITE" id="PS01275">
    <property type="entry name" value="EFP"/>
    <property type="match status" value="1"/>
</dbReference>
<reference key="1">
    <citation type="submission" date="2009-01" db="EMBL/GenBank/DDBJ databases">
        <title>Complete sequence of chromosome of Caldicellulosiruptor becscii DSM 6725.</title>
        <authorList>
            <person name="Lucas S."/>
            <person name="Copeland A."/>
            <person name="Lapidus A."/>
            <person name="Glavina del Rio T."/>
            <person name="Tice H."/>
            <person name="Bruce D."/>
            <person name="Goodwin L."/>
            <person name="Pitluck S."/>
            <person name="Sims D."/>
            <person name="Meincke L."/>
            <person name="Brettin T."/>
            <person name="Detter J.C."/>
            <person name="Han C."/>
            <person name="Larimer F."/>
            <person name="Land M."/>
            <person name="Hauser L."/>
            <person name="Kyrpides N."/>
            <person name="Ovchinnikova G."/>
            <person name="Kataeva I."/>
            <person name="Adams M.W.W."/>
        </authorList>
    </citation>
    <scope>NUCLEOTIDE SEQUENCE [LARGE SCALE GENOMIC DNA]</scope>
    <source>
        <strain>ATCC BAA-1888 / DSM 6725 / KCTC 15123 / Z-1320</strain>
    </source>
</reference>